<keyword id="KW-0903">Direct protein sequencing</keyword>
<keyword id="KW-0396">Initiation factor</keyword>
<keyword id="KW-0539">Nucleus</keyword>
<keyword id="KW-0597">Phosphoprotein</keyword>
<keyword id="KW-0648">Protein biosynthesis</keyword>
<keyword id="KW-1185">Reference proteome</keyword>
<protein>
    <recommendedName>
        <fullName evidence="5">Eukaryotic translation initiation factor 4B1</fullName>
        <shortName evidence="5">AtTif4B1</shortName>
        <shortName evidence="6">eIF4B1</shortName>
    </recommendedName>
</protein>
<proteinExistence type="evidence at protein level"/>
<dbReference type="EMBL" id="AF021805">
    <property type="protein sequence ID" value="AAF05869.1"/>
    <property type="molecule type" value="Genomic_DNA"/>
</dbReference>
<dbReference type="EMBL" id="AF136005">
    <property type="protein sequence ID" value="AAF27285.1"/>
    <property type="molecule type" value="mRNA"/>
</dbReference>
<dbReference type="EMBL" id="AF145232">
    <property type="protein sequence ID" value="AAF27294.1"/>
    <property type="molecule type" value="mRNA"/>
</dbReference>
<dbReference type="EMBL" id="AP001298">
    <property type="protein sequence ID" value="BAB02201.1"/>
    <property type="molecule type" value="Genomic_DNA"/>
</dbReference>
<dbReference type="EMBL" id="CP002686">
    <property type="protein sequence ID" value="AEE77153.1"/>
    <property type="molecule type" value="Genomic_DNA"/>
</dbReference>
<dbReference type="EMBL" id="AY140097">
    <property type="protein sequence ID" value="AAM98238.1"/>
    <property type="status" value="ALT_INIT"/>
    <property type="molecule type" value="mRNA"/>
</dbReference>
<dbReference type="EMBL" id="BT006541">
    <property type="protein sequence ID" value="AAP21349.1"/>
    <property type="molecule type" value="mRNA"/>
</dbReference>
<dbReference type="RefSeq" id="NP_189271.1">
    <property type="nucleotide sequence ID" value="NM_113547.2"/>
</dbReference>
<dbReference type="SMR" id="Q9LIN5"/>
<dbReference type="FunCoup" id="Q9LIN5">
    <property type="interactions" value="2035"/>
</dbReference>
<dbReference type="STRING" id="3702.Q9LIN5"/>
<dbReference type="iPTMnet" id="Q9LIN5"/>
<dbReference type="PaxDb" id="3702-AT3G26400.1"/>
<dbReference type="ProteomicsDB" id="228874"/>
<dbReference type="EnsemblPlants" id="AT3G26400.1">
    <property type="protein sequence ID" value="AT3G26400.1"/>
    <property type="gene ID" value="AT3G26400"/>
</dbReference>
<dbReference type="GeneID" id="822244"/>
<dbReference type="Gramene" id="AT3G26400.1">
    <property type="protein sequence ID" value="AT3G26400.1"/>
    <property type="gene ID" value="AT3G26400"/>
</dbReference>
<dbReference type="KEGG" id="ath:AT3G26400"/>
<dbReference type="Araport" id="AT3G26400"/>
<dbReference type="TAIR" id="AT3G26400">
    <property type="gene designation" value="EIF4B1"/>
</dbReference>
<dbReference type="eggNOG" id="ENOG502QVPR">
    <property type="taxonomic scope" value="Eukaryota"/>
</dbReference>
<dbReference type="HOGENOM" id="CLU_028368_1_0_1"/>
<dbReference type="InParanoid" id="Q9LIN5"/>
<dbReference type="OMA" id="YGAQGQR"/>
<dbReference type="PhylomeDB" id="Q9LIN5"/>
<dbReference type="PRO" id="PR:Q9LIN5"/>
<dbReference type="Proteomes" id="UP000006548">
    <property type="component" value="Chromosome 3"/>
</dbReference>
<dbReference type="ExpressionAtlas" id="Q9LIN5">
    <property type="expression patterns" value="baseline and differential"/>
</dbReference>
<dbReference type="GO" id="GO:0005829">
    <property type="term" value="C:cytosol"/>
    <property type="evidence" value="ECO:0007005"/>
    <property type="project" value="TAIR"/>
</dbReference>
<dbReference type="GO" id="GO:0005634">
    <property type="term" value="C:nucleus"/>
    <property type="evidence" value="ECO:0007669"/>
    <property type="project" value="UniProtKB-SubCell"/>
</dbReference>
<dbReference type="GO" id="GO:0003729">
    <property type="term" value="F:mRNA binding"/>
    <property type="evidence" value="ECO:0000314"/>
    <property type="project" value="TAIR"/>
</dbReference>
<dbReference type="GO" id="GO:0042803">
    <property type="term" value="F:protein homodimerization activity"/>
    <property type="evidence" value="ECO:0000250"/>
    <property type="project" value="UniProtKB"/>
</dbReference>
<dbReference type="GO" id="GO:0003743">
    <property type="term" value="F:translation initiation factor activity"/>
    <property type="evidence" value="ECO:0000314"/>
    <property type="project" value="TAIR"/>
</dbReference>
<dbReference type="InterPro" id="IPR010433">
    <property type="entry name" value="EIF-4B_pln"/>
</dbReference>
<dbReference type="PANTHER" id="PTHR32091">
    <property type="entry name" value="EUKARYOTIC TRANSLATION INITIATION FACTOR 4B"/>
    <property type="match status" value="1"/>
</dbReference>
<dbReference type="PANTHER" id="PTHR32091:SF20">
    <property type="entry name" value="EUKARYOTIC TRANSLATION INITIATION FACTOR 4B1"/>
    <property type="match status" value="1"/>
</dbReference>
<dbReference type="Pfam" id="PF06273">
    <property type="entry name" value="eIF-4B"/>
    <property type="match status" value="1"/>
</dbReference>
<reference key="1">
    <citation type="journal article" date="1999" name="Biochem. Biophys. Res. Commun.">
        <title>Eukaryotic initiation factor 4B from wheat and Arabidopsis thaliana is a member of a multigene family.</title>
        <authorList>
            <person name="Metz A.M."/>
            <person name="Wong K.C."/>
            <person name="Malmstrom S.A."/>
            <person name="Browning K.S."/>
        </authorList>
    </citation>
    <scope>NUCLEOTIDE SEQUENCE [GENOMIC DNA / MRNA]</scope>
    <scope>GENE FAMILY</scope>
    <scope>NOMENCLATURE</scope>
    <source>
        <strain>cv. Columbia</strain>
        <strain>cv. Landsberg erecta</strain>
    </source>
</reference>
<reference key="2">
    <citation type="journal article" date="2000" name="DNA Res.">
        <title>Structural analysis of Arabidopsis thaliana chromosome 3. II. Sequence features of the 4,251,695 bp regions covered by 90 P1, TAC and BAC clones.</title>
        <authorList>
            <person name="Kaneko T."/>
            <person name="Katoh T."/>
            <person name="Sato S."/>
            <person name="Nakamura Y."/>
            <person name="Asamizu E."/>
            <person name="Tabata S."/>
        </authorList>
    </citation>
    <scope>NUCLEOTIDE SEQUENCE [LARGE SCALE GENOMIC DNA]</scope>
    <source>
        <strain>cv. Columbia</strain>
    </source>
</reference>
<reference key="3">
    <citation type="journal article" date="2017" name="Plant J.">
        <title>Araport11: a complete reannotation of the Arabidopsis thaliana reference genome.</title>
        <authorList>
            <person name="Cheng C.Y."/>
            <person name="Krishnakumar V."/>
            <person name="Chan A.P."/>
            <person name="Thibaud-Nissen F."/>
            <person name="Schobel S."/>
            <person name="Town C.D."/>
        </authorList>
    </citation>
    <scope>GENOME REANNOTATION</scope>
    <source>
        <strain>cv. Columbia</strain>
    </source>
</reference>
<reference key="4">
    <citation type="journal article" date="2003" name="Science">
        <title>Empirical analysis of transcriptional activity in the Arabidopsis genome.</title>
        <authorList>
            <person name="Yamada K."/>
            <person name="Lim J."/>
            <person name="Dale J.M."/>
            <person name="Chen H."/>
            <person name="Shinn P."/>
            <person name="Palm C.J."/>
            <person name="Southwick A.M."/>
            <person name="Wu H.C."/>
            <person name="Kim C.J."/>
            <person name="Nguyen M."/>
            <person name="Pham P.K."/>
            <person name="Cheuk R.F."/>
            <person name="Karlin-Newmann G."/>
            <person name="Liu S.X."/>
            <person name="Lam B."/>
            <person name="Sakano H."/>
            <person name="Wu T."/>
            <person name="Yu G."/>
            <person name="Miranda M."/>
            <person name="Quach H.L."/>
            <person name="Tripp M."/>
            <person name="Chang C.H."/>
            <person name="Lee J.M."/>
            <person name="Toriumi M.J."/>
            <person name="Chan M.M."/>
            <person name="Tang C.C."/>
            <person name="Onodera C.S."/>
            <person name="Deng J.M."/>
            <person name="Akiyama K."/>
            <person name="Ansari Y."/>
            <person name="Arakawa T."/>
            <person name="Banh J."/>
            <person name="Banno F."/>
            <person name="Bowser L."/>
            <person name="Brooks S.Y."/>
            <person name="Carninci P."/>
            <person name="Chao Q."/>
            <person name="Choy N."/>
            <person name="Enju A."/>
            <person name="Goldsmith A.D."/>
            <person name="Gurjal M."/>
            <person name="Hansen N.F."/>
            <person name="Hayashizaki Y."/>
            <person name="Johnson-Hopson C."/>
            <person name="Hsuan V.W."/>
            <person name="Iida K."/>
            <person name="Karnes M."/>
            <person name="Khan S."/>
            <person name="Koesema E."/>
            <person name="Ishida J."/>
            <person name="Jiang P.X."/>
            <person name="Jones T."/>
            <person name="Kawai J."/>
            <person name="Kamiya A."/>
            <person name="Meyers C."/>
            <person name="Nakajima M."/>
            <person name="Narusaka M."/>
            <person name="Seki M."/>
            <person name="Sakurai T."/>
            <person name="Satou M."/>
            <person name="Tamse R."/>
            <person name="Vaysberg M."/>
            <person name="Wallender E.K."/>
            <person name="Wong C."/>
            <person name="Yamamura Y."/>
            <person name="Yuan S."/>
            <person name="Shinozaki K."/>
            <person name="Davis R.W."/>
            <person name="Theologis A."/>
            <person name="Ecker J.R."/>
        </authorList>
    </citation>
    <scope>NUCLEOTIDE SEQUENCE [LARGE SCALE MRNA] OF 216-532</scope>
    <source>
        <strain>cv. Columbia</strain>
    </source>
</reference>
<reference key="5">
    <citation type="journal article" date="2009" name="Plant Physiol.">
        <title>Evidence for variation in the optimal translation initiation complex: plant eIF4B, eIF4F, and eIF(iso)4F differentially promote translation of mRNAs.</title>
        <authorList>
            <person name="Mayberry L.K."/>
            <person name="Allen M.L."/>
            <person name="Dennis M.D."/>
            <person name="Browning K.S."/>
        </authorList>
    </citation>
    <scope>FUNCTION</scope>
    <scope>PROTEIN SEQUENCE OF 293-307</scope>
    <scope>SUBUNIT</scope>
</reference>
<reference key="6">
    <citation type="journal article" date="2009" name="Plant Physiol.">
        <title>Large-scale Arabidopsis phosphoproteome profiling reveals novel chloroplast kinase substrates and phosphorylation networks.</title>
        <authorList>
            <person name="Reiland S."/>
            <person name="Messerli G."/>
            <person name="Baerenfaller K."/>
            <person name="Gerrits B."/>
            <person name="Endler A."/>
            <person name="Grossmann J."/>
            <person name="Gruissem W."/>
            <person name="Baginsky S."/>
        </authorList>
    </citation>
    <scope>IDENTIFICATION BY MASS SPECTROMETRY [LARGE SCALE ANALYSIS]</scope>
</reference>
<accession>Q9LIN5</accession>
<accession>Q8L6Y0</accession>
<accession>Q9LD19</accession>
<accession>Q9M7F0</accession>
<accession>Q9SQK7</accession>
<comment type="function">
    <text evidence="4">Promotes the eIF4F and eIF4A RNA-dependent ATP-hydrolysis activity with different efficiency depending on mRNAs, thus providing mRNA discrimination during initiation of translation.</text>
</comment>
<comment type="subunit">
    <text evidence="1 4">Homodimer (By similarity). Nonspherical monomer. mRNA-discriminating component of initiation complexes (PubMed:19493973).</text>
</comment>
<comment type="subcellular location">
    <subcellularLocation>
        <location evidence="2">Nucleus</location>
    </subcellularLocation>
</comment>
<comment type="PTM">
    <text evidence="1">Phosphorylated.</text>
</comment>
<comment type="similarity">
    <text evidence="6">Belongs to the eIF-4 subunit B family.</text>
</comment>
<comment type="sequence caution" evidence="6">
    <conflict type="erroneous initiation">
        <sequence resource="EMBL-CDS" id="AAM98238"/>
    </conflict>
    <text>Truncated N-terminus.</text>
</comment>
<gene>
    <name evidence="5" type="primary">EIF4B1</name>
    <name evidence="7" type="ordered locus">At3g26400</name>
    <name evidence="8" type="ORF">F20C19.13</name>
</gene>
<feature type="chain" id="PRO_0000434274" description="Eukaryotic translation initiation factor 4B1">
    <location>
        <begin position="1"/>
        <end position="532"/>
    </location>
</feature>
<feature type="region of interest" description="Disordered" evidence="3">
    <location>
        <begin position="16"/>
        <end position="365"/>
    </location>
</feature>
<feature type="region of interest" description="Disordered" evidence="3">
    <location>
        <begin position="401"/>
        <end position="434"/>
    </location>
</feature>
<feature type="region of interest" description="Disordered" evidence="3">
    <location>
        <begin position="451"/>
        <end position="532"/>
    </location>
</feature>
<feature type="short sequence motif" description="Nuclear localization signal 1" evidence="2">
    <location>
        <begin position="177"/>
        <end position="184"/>
    </location>
</feature>
<feature type="short sequence motif" description="Nuclear localization signal 2" evidence="2">
    <location>
        <begin position="237"/>
        <end position="244"/>
    </location>
</feature>
<feature type="compositionally biased region" description="Low complexity" evidence="3">
    <location>
        <begin position="26"/>
        <end position="35"/>
    </location>
</feature>
<feature type="compositionally biased region" description="Gly residues" evidence="3">
    <location>
        <begin position="105"/>
        <end position="120"/>
    </location>
</feature>
<feature type="compositionally biased region" description="Gly residues" evidence="3">
    <location>
        <begin position="132"/>
        <end position="147"/>
    </location>
</feature>
<feature type="compositionally biased region" description="Basic and acidic residues" evidence="3">
    <location>
        <begin position="167"/>
        <end position="180"/>
    </location>
</feature>
<feature type="compositionally biased region" description="Gly residues" evidence="3">
    <location>
        <begin position="193"/>
        <end position="217"/>
    </location>
</feature>
<feature type="compositionally biased region" description="Low complexity" evidence="3">
    <location>
        <begin position="237"/>
        <end position="247"/>
    </location>
</feature>
<feature type="compositionally biased region" description="Basic and acidic residues" evidence="3">
    <location>
        <begin position="249"/>
        <end position="263"/>
    </location>
</feature>
<feature type="compositionally biased region" description="Basic and acidic residues" evidence="3">
    <location>
        <begin position="286"/>
        <end position="310"/>
    </location>
</feature>
<feature type="compositionally biased region" description="Low complexity" evidence="3">
    <location>
        <begin position="315"/>
        <end position="337"/>
    </location>
</feature>
<feature type="compositionally biased region" description="Basic and acidic residues" evidence="3">
    <location>
        <begin position="355"/>
        <end position="365"/>
    </location>
</feature>
<feature type="compositionally biased region" description="Basic and acidic residues" evidence="3">
    <location>
        <begin position="401"/>
        <end position="416"/>
    </location>
</feature>
<feature type="compositionally biased region" description="Basic and acidic residues" evidence="3">
    <location>
        <begin position="472"/>
        <end position="494"/>
    </location>
</feature>
<feature type="compositionally biased region" description="Basic and acidic residues" evidence="3">
    <location>
        <begin position="507"/>
        <end position="520"/>
    </location>
</feature>
<feature type="sequence conflict" description="In Ref. 1; AAF05869." evidence="6" ref="1">
    <original>S</original>
    <variation>R</variation>
    <location>
        <position position="37"/>
    </location>
</feature>
<feature type="sequence conflict" description="In Ref. 1; AAF05869." evidence="6" ref="1">
    <original>F</original>
    <variation>L</variation>
    <location>
        <position position="184"/>
    </location>
</feature>
<feature type="sequence conflict" description="In Ref. 1; AAF05869." evidence="6" ref="1">
    <original>D</original>
    <variation>G</variation>
    <location>
        <position position="195"/>
    </location>
</feature>
<feature type="sequence conflict" description="In Ref. 1; AAF05869." evidence="6" ref="1">
    <location>
        <position position="207"/>
    </location>
</feature>
<feature type="sequence conflict" description="In Ref. 1; AAF05869." evidence="6" ref="1">
    <original>E</original>
    <variation>D</variation>
    <location>
        <position position="305"/>
    </location>
</feature>
<feature type="sequence conflict" description="In Ref. 1; AAF05869." evidence="6" ref="1">
    <original>V</original>
    <variation>I</variation>
    <location>
        <position position="408"/>
    </location>
</feature>
<feature type="sequence conflict" description="In Ref. 1; AAF05869." evidence="6" ref="1">
    <original>L</original>
    <variation>V</variation>
    <location>
        <position position="428"/>
    </location>
</feature>
<feature type="sequence conflict" description="In Ref. 1; AAF05869." evidence="6" ref="1">
    <original>N</original>
    <variation>D</variation>
    <location>
        <position position="507"/>
    </location>
</feature>
<feature type="sequence conflict" description="In Ref. 1; AAF05869." evidence="6" ref="1">
    <original>T</original>
    <variation>S</variation>
    <location>
        <position position="516"/>
    </location>
</feature>
<sequence length="532" mass="57720">MSKAWGGIGIGAWADEAERADEEQAAEATAATADTQSFPSLREAAAATATSGKSRKMKKMSLSEFTTGAYTAPGGRNSVGLTQQEILQLPTGPRQRSEEEMQPGRLGGGFSSYGGRSGGRIGRDRDDSDGSWSGGGGGGGRRPYGGGFDDDRRGNQSRVSDFPQPSRADEVDDWGKEKKPLPSFDQGRQGRYSGDGGGFGGGGSGFGGGGGGGGGGLSRADDVDNWGAGKRQAPVRSSTFGSSFGDSGQEERRRLVLEPRKVESGGSETPPVVEKTSKPNPFGAARPREDVLAEKGLDWKKIDSEIEAKKGSSQTSRPTSAHSSRPSSAQSNRSESSGLNNVVKPRPKVNPFGDAKPREVLLEEQGKDWRKMDLELEHRRVDRPETEEEKMLKEEIEELRKKLEKESVAPEIKESDQEPGSNNNHNDLPEIIRGKEKDLEILTRELDDKVRFRQKPVERPGSGAGRTGTYSERTHSRAGSIDETRSFESTERPRSRGAVDAWVRPANEQRRNFQGTKERGFFSNRSSSREGW</sequence>
<name>IF4B1_ARATH</name>
<organism evidence="9">
    <name type="scientific">Arabidopsis thaliana</name>
    <name type="common">Mouse-ear cress</name>
    <dbReference type="NCBI Taxonomy" id="3702"/>
    <lineage>
        <taxon>Eukaryota</taxon>
        <taxon>Viridiplantae</taxon>
        <taxon>Streptophyta</taxon>
        <taxon>Embryophyta</taxon>
        <taxon>Tracheophyta</taxon>
        <taxon>Spermatophyta</taxon>
        <taxon>Magnoliopsida</taxon>
        <taxon>eudicotyledons</taxon>
        <taxon>Gunneridae</taxon>
        <taxon>Pentapetalae</taxon>
        <taxon>rosids</taxon>
        <taxon>malvids</taxon>
        <taxon>Brassicales</taxon>
        <taxon>Brassicaceae</taxon>
        <taxon>Camelineae</taxon>
        <taxon>Arabidopsis</taxon>
    </lineage>
</organism>
<evidence type="ECO:0000250" key="1">
    <source>
        <dbReference type="UniProtKB" id="Q9AUJ7"/>
    </source>
</evidence>
<evidence type="ECO:0000255" key="2">
    <source>
        <dbReference type="PROSITE-ProRule" id="PRU00768"/>
    </source>
</evidence>
<evidence type="ECO:0000256" key="3">
    <source>
        <dbReference type="SAM" id="MobiDB-lite"/>
    </source>
</evidence>
<evidence type="ECO:0000269" key="4">
    <source>
    </source>
</evidence>
<evidence type="ECO:0000303" key="5">
    <source>
    </source>
</evidence>
<evidence type="ECO:0000305" key="6"/>
<evidence type="ECO:0000312" key="7">
    <source>
        <dbReference type="EMBL" id="AEE77153.1"/>
    </source>
</evidence>
<evidence type="ECO:0000312" key="8">
    <source>
        <dbReference type="EMBL" id="BAB02201.1"/>
    </source>
</evidence>
<evidence type="ECO:0000312" key="9">
    <source>
        <dbReference type="Proteomes" id="UP000006548"/>
    </source>
</evidence>